<accession>Q07750</accession>
<accession>Q9UAU4</accession>
<organism>
    <name type="scientific">Caenorhabditis elegans</name>
    <dbReference type="NCBI Taxonomy" id="6239"/>
    <lineage>
        <taxon>Eukaryota</taxon>
        <taxon>Metazoa</taxon>
        <taxon>Ecdysozoa</taxon>
        <taxon>Nematoda</taxon>
        <taxon>Chromadorea</taxon>
        <taxon>Rhabditida</taxon>
        <taxon>Rhabditina</taxon>
        <taxon>Rhabditomorpha</taxon>
        <taxon>Rhabditoidea</taxon>
        <taxon>Rhabditidae</taxon>
        <taxon>Peloderinae</taxon>
        <taxon>Caenorhabditis</taxon>
    </lineage>
</organism>
<dbReference type="EMBL" id="L18963">
    <property type="protein sequence ID" value="AAC14458.1"/>
    <property type="molecule type" value="Genomic_DNA"/>
</dbReference>
<dbReference type="EMBL" id="FO080816">
    <property type="protein sequence ID" value="CCD67021.1"/>
    <property type="molecule type" value="Genomic_DNA"/>
</dbReference>
<dbReference type="EMBL" id="FO080816">
    <property type="protein sequence ID" value="CCD67022.1"/>
    <property type="molecule type" value="Genomic_DNA"/>
</dbReference>
<dbReference type="PIR" id="S41728">
    <property type="entry name" value="S41728"/>
</dbReference>
<dbReference type="RefSeq" id="NP_503425.2">
    <molecule id="Q07750-1"/>
    <property type="nucleotide sequence ID" value="NM_071024.5"/>
</dbReference>
<dbReference type="PDB" id="2MP4">
    <property type="method" value="NMR"/>
    <property type="chains" value="A=1-156"/>
</dbReference>
<dbReference type="PDBsum" id="2MP4"/>
<dbReference type="BMRB" id="Q07750"/>
<dbReference type="SMR" id="Q07750"/>
<dbReference type="BioGRID" id="43707">
    <property type="interactions" value="67"/>
</dbReference>
<dbReference type="FunCoup" id="Q07750">
    <property type="interactions" value="1411"/>
</dbReference>
<dbReference type="IntAct" id="Q07750">
    <property type="interactions" value="2"/>
</dbReference>
<dbReference type="STRING" id="6239.F53E2.2.2"/>
<dbReference type="PaxDb" id="6239-C38C3.5b.2"/>
<dbReference type="PeptideAtlas" id="Q07750"/>
<dbReference type="EnsemblMetazoa" id="F53E2.2.1">
    <molecule id="Q07750-1"/>
    <property type="protein sequence ID" value="F53E2.2.1"/>
    <property type="gene ID" value="WBGene00302980"/>
</dbReference>
<dbReference type="KEGG" id="cel:CELE_F53E2.2"/>
<dbReference type="UCSC" id="C38C3.5b.1">
    <molecule id="Q07750-1"/>
    <property type="organism name" value="c. elegans"/>
</dbReference>
<dbReference type="AGR" id="WB:WBGene00302980"/>
<dbReference type="CTD" id="41657006"/>
<dbReference type="WormBase" id="F53E2.2">
    <property type="protein sequence ID" value="CE20547"/>
    <property type="gene ID" value="WBGene00302980"/>
</dbReference>
<dbReference type="eggNOG" id="KOG1735">
    <property type="taxonomic scope" value="Eukaryota"/>
</dbReference>
<dbReference type="GeneTree" id="ENSGT00950000183000"/>
<dbReference type="InParanoid" id="Q07750"/>
<dbReference type="OrthoDB" id="10249245at2759"/>
<dbReference type="PhylomeDB" id="Q07750"/>
<dbReference type="EvolutionaryTrace" id="Q07750"/>
<dbReference type="Proteomes" id="UP000001940">
    <property type="component" value="Chromosome V"/>
</dbReference>
<dbReference type="Bgee" id="WBGene00302980">
    <property type="expression patterns" value="Expressed in pharyngeal muscle cell (C elegans) and 4 other cell types or tissues"/>
</dbReference>
<dbReference type="GO" id="GO:0015629">
    <property type="term" value="C:actin cytoskeleton"/>
    <property type="evidence" value="ECO:0000318"/>
    <property type="project" value="GO_Central"/>
</dbReference>
<dbReference type="GO" id="GO:0005737">
    <property type="term" value="C:cytoplasm"/>
    <property type="evidence" value="ECO:0000314"/>
    <property type="project" value="WormBase"/>
</dbReference>
<dbReference type="GO" id="GO:1990904">
    <property type="term" value="C:ribonucleoprotein complex"/>
    <property type="evidence" value="ECO:0000353"/>
    <property type="project" value="WormBase"/>
</dbReference>
<dbReference type="GO" id="GO:0005865">
    <property type="term" value="C:striated muscle thin filament"/>
    <property type="evidence" value="ECO:0000314"/>
    <property type="project" value="WormBase"/>
</dbReference>
<dbReference type="GO" id="GO:0051015">
    <property type="term" value="F:actin filament binding"/>
    <property type="evidence" value="ECO:0000314"/>
    <property type="project" value="WormBase"/>
</dbReference>
<dbReference type="GO" id="GO:0030042">
    <property type="term" value="P:actin filament depolymerization"/>
    <property type="evidence" value="ECO:0000314"/>
    <property type="project" value="WormBase"/>
</dbReference>
<dbReference type="GO" id="GO:0030043">
    <property type="term" value="P:actin filament fragmentation"/>
    <property type="evidence" value="ECO:0000318"/>
    <property type="project" value="GO_Central"/>
</dbReference>
<dbReference type="GO" id="GO:0051014">
    <property type="term" value="P:actin filament severing"/>
    <property type="evidence" value="ECO:0000314"/>
    <property type="project" value="WormBase"/>
</dbReference>
<dbReference type="GO" id="GO:0009792">
    <property type="term" value="P:embryo development ending in birth or egg hatching"/>
    <property type="evidence" value="ECO:0000315"/>
    <property type="project" value="WormBase"/>
</dbReference>
<dbReference type="GO" id="GO:0040011">
    <property type="term" value="P:locomotion"/>
    <property type="evidence" value="ECO:0000315"/>
    <property type="project" value="WormBase"/>
</dbReference>
<dbReference type="GO" id="GO:0071689">
    <property type="term" value="P:muscle thin filament assembly"/>
    <property type="evidence" value="ECO:0000315"/>
    <property type="project" value="WormBase"/>
</dbReference>
<dbReference type="GO" id="GO:0030838">
    <property type="term" value="P:positive regulation of actin filament polymerization"/>
    <property type="evidence" value="ECO:0000314"/>
    <property type="project" value="WormBase"/>
</dbReference>
<dbReference type="GO" id="GO:0030240">
    <property type="term" value="P:skeletal muscle thin filament assembly"/>
    <property type="evidence" value="ECO:0000315"/>
    <property type="project" value="WormBase"/>
</dbReference>
<dbReference type="CDD" id="cd11286">
    <property type="entry name" value="ADF_cofilin_like"/>
    <property type="match status" value="1"/>
</dbReference>
<dbReference type="Gene3D" id="3.40.20.10">
    <property type="entry name" value="Severin"/>
    <property type="match status" value="2"/>
</dbReference>
<dbReference type="InterPro" id="IPR002108">
    <property type="entry name" value="ADF-H"/>
</dbReference>
<dbReference type="InterPro" id="IPR029006">
    <property type="entry name" value="ADF-H/Gelsolin-like_dom_sf"/>
</dbReference>
<dbReference type="InterPro" id="IPR017904">
    <property type="entry name" value="ADF/Cofilin"/>
</dbReference>
<dbReference type="PANTHER" id="PTHR11913">
    <property type="entry name" value="COFILIN-RELATED"/>
    <property type="match status" value="1"/>
</dbReference>
<dbReference type="Pfam" id="PF00241">
    <property type="entry name" value="Cofilin_ADF"/>
    <property type="match status" value="1"/>
</dbReference>
<dbReference type="SMART" id="SM00102">
    <property type="entry name" value="ADF"/>
    <property type="match status" value="1"/>
</dbReference>
<dbReference type="SUPFAM" id="SSF55753">
    <property type="entry name" value="Actin depolymerizing proteins"/>
    <property type="match status" value="2"/>
</dbReference>
<dbReference type="PROSITE" id="PS51263">
    <property type="entry name" value="ADF_H"/>
    <property type="match status" value="1"/>
</dbReference>
<name>ADF1_CAEEL</name>
<gene>
    <name evidence="5" type="ORF">F53E2.2</name>
</gene>
<sequence>MSSGVMVDPDVQTSFQKLSEGRKEYRYIIFKIDENKVIVEAAVTQDQLGITGDDYDDSSKAAFDKFVEDVKSRTDNLTDCRYAVFDFKFTCSRVGAGTSKMDKIIFLQICPDGASIKKKMVYASSAAAIKTSLGTGKILQFQVSDESEMSHKELLNNCPDNAPVRRRMLYASSVRALKASLGLESLFQVQASEMSDLDEKSVKSDLMSNQRI</sequence>
<feature type="chain" id="PRO_0000214938" description="Actin-depolymerizing factor 1, isoforms a/b">
    <location>
        <begin position="1"/>
        <end position="212"/>
    </location>
</feature>
<feature type="domain" description="ADF-H" evidence="1">
    <location>
        <begin position="3"/>
        <end position="159"/>
    </location>
</feature>
<feature type="splice variant" id="VSP_020111" description="In isoform a." evidence="4">
    <original>NCPDNAPVR</original>
    <variation>KLGEKYGDH</variation>
    <location>
        <begin position="157"/>
        <end position="165"/>
    </location>
</feature>
<feature type="splice variant" id="VSP_020112" description="In isoform a." evidence="4">
    <location>
        <begin position="166"/>
        <end position="212"/>
    </location>
</feature>
<feature type="helix" evidence="6">
    <location>
        <begin position="10"/>
        <end position="19"/>
    </location>
</feature>
<feature type="turn" evidence="6">
    <location>
        <begin position="20"/>
        <end position="22"/>
    </location>
</feature>
<feature type="strand" evidence="6">
    <location>
        <begin position="23"/>
        <end position="26"/>
    </location>
</feature>
<feature type="strand" evidence="6">
    <location>
        <begin position="28"/>
        <end position="33"/>
    </location>
</feature>
<feature type="strand" evidence="6">
    <location>
        <begin position="36"/>
        <end position="41"/>
    </location>
</feature>
<feature type="turn" evidence="6">
    <location>
        <begin position="46"/>
        <end position="49"/>
    </location>
</feature>
<feature type="turn" evidence="6">
    <location>
        <begin position="54"/>
        <end position="57"/>
    </location>
</feature>
<feature type="helix" evidence="6">
    <location>
        <begin position="60"/>
        <end position="73"/>
    </location>
</feature>
<feature type="turn" evidence="6">
    <location>
        <begin position="74"/>
        <end position="77"/>
    </location>
</feature>
<feature type="strand" evidence="6">
    <location>
        <begin position="82"/>
        <end position="92"/>
    </location>
</feature>
<feature type="strand" evidence="6">
    <location>
        <begin position="98"/>
        <end position="109"/>
    </location>
</feature>
<feature type="helix" evidence="6">
    <location>
        <begin position="116"/>
        <end position="133"/>
    </location>
</feature>
<feature type="strand" evidence="6">
    <location>
        <begin position="139"/>
        <end position="143"/>
    </location>
</feature>
<feature type="helix" evidence="6">
    <location>
        <begin position="146"/>
        <end position="149"/>
    </location>
</feature>
<feature type="helix" evidence="6">
    <location>
        <begin position="151"/>
        <end position="156"/>
    </location>
</feature>
<evidence type="ECO:0000255" key="1">
    <source>
        <dbReference type="PROSITE-ProRule" id="PRU00599"/>
    </source>
</evidence>
<evidence type="ECO:0000269" key="2">
    <source>
    </source>
</evidence>
<evidence type="ECO:0000303" key="3">
    <source>
    </source>
</evidence>
<evidence type="ECO:0000305" key="4"/>
<evidence type="ECO:0000312" key="5">
    <source>
        <dbReference type="WormBase" id="F53E2.2"/>
    </source>
</evidence>
<evidence type="ECO:0007829" key="6">
    <source>
        <dbReference type="PDB" id="2MP4"/>
    </source>
</evidence>
<keyword id="KW-0002">3D-structure</keyword>
<keyword id="KW-0009">Actin-binding</keyword>
<keyword id="KW-0025">Alternative splicing</keyword>
<keyword id="KW-1185">Reference proteome</keyword>
<reference key="1">
    <citation type="journal article" date="1994" name="Mol. Gen. Genet.">
        <title>The Caenorhabditis elegans unc-60 gene encodes proteins homologous to a family of actin-binding proteins.</title>
        <authorList>
            <person name="McKim K.S."/>
            <person name="Matheson C."/>
            <person name="Marra M.A."/>
            <person name="Wakarchuk M.F."/>
            <person name="Baillie D.L."/>
        </authorList>
    </citation>
    <scope>NUCLEOTIDE SEQUENCE [GENOMIC DNA]</scope>
</reference>
<reference key="2">
    <citation type="journal article" date="1998" name="Science">
        <title>Genome sequence of the nematode C. elegans: a platform for investigating biology.</title>
        <authorList>
            <consortium name="The C. elegans sequencing consortium"/>
        </authorList>
    </citation>
    <scope>NUCLEOTIDE SEQUENCE [LARGE SCALE GENOMIC DNA]</scope>
    <scope>ALTERNATIVE SPLICING</scope>
    <source>
        <strain>Bristol N2</strain>
    </source>
</reference>
<reference key="3">
    <citation type="journal article" date="2007" name="J. Cell Sci.">
        <title>UNC-87, a calponin-related protein in C. elegans, antagonizes ADF/cofilin-mediated actin filament dynamics.</title>
        <authorList>
            <person name="Yamashiro S."/>
            <person name="Gimona M."/>
            <person name="Ono S."/>
        </authorList>
    </citation>
    <scope>FUNCTION</scope>
    <scope>INTERACTION WITH F-ACTIN</scope>
</reference>
<protein>
    <recommendedName>
        <fullName>Actin-depolymerizing factor 1, isoforms a/b</fullName>
    </recommendedName>
</protein>
<proteinExistence type="evidence at protein level"/>
<comment type="function">
    <text evidence="2 3">Depolymerizes growing actin filaments in muscle cells; required for the assembly of actin filaments into the functional contractile myofilament lattice of muscle (PubMed:8107682). Competes with unc-87 for actin binding and inhibits the actin-bundling activity of unc-87 (PubMed:17684058).</text>
</comment>
<comment type="subunit">
    <text evidence="2">Interacts with F-actin.</text>
</comment>
<comment type="alternative products">
    <event type="alternative splicing"/>
    <isoform>
        <id>Q07750-2</id>
        <name>b</name>
        <sequence type="displayed"/>
    </isoform>
    <isoform>
        <id>Q07750-1</id>
        <name>a</name>
        <name>ADF1</name>
        <sequence type="described" ref="VSP_020111 VSP_020112"/>
    </isoform>
    <isoform>
        <id>Q07749-1</id>
        <name>c</name>
        <name>ADF2</name>
        <sequence type="external"/>
    </isoform>
    <text>Isoforms only share an exon that codes for the initiator Met.</text>
</comment>
<comment type="similarity">
    <text evidence="4">Belongs to the actin-binding proteins ADF family.</text>
</comment>